<name>Y1726_STREM</name>
<proteinExistence type="inferred from homology"/>
<evidence type="ECO:0000255" key="1">
    <source>
        <dbReference type="HAMAP-Rule" id="MF_00800"/>
    </source>
</evidence>
<protein>
    <recommendedName>
        <fullName evidence="1">UPF0340 protein Sez_1726</fullName>
    </recommendedName>
</protein>
<gene>
    <name type="ordered locus">Sez_1726</name>
</gene>
<accession>B4U4Y6</accession>
<dbReference type="EMBL" id="CP001129">
    <property type="protein sequence ID" value="ACG63053.1"/>
    <property type="molecule type" value="Genomic_DNA"/>
</dbReference>
<dbReference type="RefSeq" id="WP_012516308.1">
    <property type="nucleotide sequence ID" value="NC_011134.1"/>
</dbReference>
<dbReference type="SMR" id="B4U4Y6"/>
<dbReference type="KEGG" id="sez:Sez_1726"/>
<dbReference type="HOGENOM" id="CLU_106658_0_0_9"/>
<dbReference type="Proteomes" id="UP000001873">
    <property type="component" value="Chromosome"/>
</dbReference>
<dbReference type="Gene3D" id="3.40.50.10360">
    <property type="entry name" value="Hypothetical protein TT1679"/>
    <property type="match status" value="1"/>
</dbReference>
<dbReference type="HAMAP" id="MF_00800">
    <property type="entry name" value="UPF0340"/>
    <property type="match status" value="1"/>
</dbReference>
<dbReference type="InterPro" id="IPR028345">
    <property type="entry name" value="Antibiotic_NAT-like"/>
</dbReference>
<dbReference type="InterPro" id="IPR006340">
    <property type="entry name" value="DUF436"/>
</dbReference>
<dbReference type="NCBIfam" id="TIGR01440">
    <property type="entry name" value="TIGR01440 family protein"/>
    <property type="match status" value="1"/>
</dbReference>
<dbReference type="Pfam" id="PF04260">
    <property type="entry name" value="DUF436"/>
    <property type="match status" value="1"/>
</dbReference>
<dbReference type="PIRSF" id="PIRSF007510">
    <property type="entry name" value="UCP007510"/>
    <property type="match status" value="1"/>
</dbReference>
<dbReference type="SUPFAM" id="SSF110710">
    <property type="entry name" value="TTHA0583/YokD-like"/>
    <property type="match status" value="1"/>
</dbReference>
<sequence length="186" mass="20057">MDLKVLREEARSILIDVVERSAIKKGQLFVLGLSSSEVLGGRIGQHSSLEVGEVIVKVVLEELSSRGIHLAVQGCEHINRALVLEESVAEEYQLELVNVLPSLHAGGSGQLAAFKYMKQPVEVEAIAAHAGLDIGDTSIGMHVKRVQVPLVPIQRELGGAHVTALASRPKLIGGVRARYQPDPIRK</sequence>
<comment type="similarity">
    <text evidence="1">Belongs to the UPF0340 family.</text>
</comment>
<reference key="1">
    <citation type="journal article" date="2008" name="PLoS ONE">
        <title>Genome sequence of a lancefield group C Streptococcus zooepidemicus strain causing epidemic nephritis: new information about an old disease.</title>
        <authorList>
            <person name="Beres S.B."/>
            <person name="Sesso R."/>
            <person name="Pinto S.W.L."/>
            <person name="Hoe N.P."/>
            <person name="Porcella S.F."/>
            <person name="Deleo F.R."/>
            <person name="Musser J.M."/>
        </authorList>
    </citation>
    <scope>NUCLEOTIDE SEQUENCE [LARGE SCALE GENOMIC DNA]</scope>
    <source>
        <strain>MGCS10565</strain>
    </source>
</reference>
<organism>
    <name type="scientific">Streptococcus equi subsp. zooepidemicus (strain MGCS10565)</name>
    <dbReference type="NCBI Taxonomy" id="552526"/>
    <lineage>
        <taxon>Bacteria</taxon>
        <taxon>Bacillati</taxon>
        <taxon>Bacillota</taxon>
        <taxon>Bacilli</taxon>
        <taxon>Lactobacillales</taxon>
        <taxon>Streptococcaceae</taxon>
        <taxon>Streptococcus</taxon>
    </lineage>
</organism>
<feature type="chain" id="PRO_1000198484" description="UPF0340 protein Sez_1726">
    <location>
        <begin position="1"/>
        <end position="186"/>
    </location>
</feature>